<dbReference type="EC" id="2.5.1.19" evidence="1"/>
<dbReference type="EMBL" id="CP001020">
    <property type="protein sequence ID" value="ACJ20491.1"/>
    <property type="molecule type" value="Genomic_DNA"/>
</dbReference>
<dbReference type="RefSeq" id="WP_005771162.1">
    <property type="nucleotide sequence ID" value="NC_011528.1"/>
</dbReference>
<dbReference type="SMR" id="B6J892"/>
<dbReference type="KEGG" id="cbc:CbuK_1310"/>
<dbReference type="HOGENOM" id="CLU_024321_0_1_6"/>
<dbReference type="UniPathway" id="UPA00053">
    <property type="reaction ID" value="UER00089"/>
</dbReference>
<dbReference type="GO" id="GO:0005737">
    <property type="term" value="C:cytoplasm"/>
    <property type="evidence" value="ECO:0007669"/>
    <property type="project" value="UniProtKB-SubCell"/>
</dbReference>
<dbReference type="GO" id="GO:0003866">
    <property type="term" value="F:3-phosphoshikimate 1-carboxyvinyltransferase activity"/>
    <property type="evidence" value="ECO:0007669"/>
    <property type="project" value="UniProtKB-UniRule"/>
</dbReference>
<dbReference type="GO" id="GO:0008652">
    <property type="term" value="P:amino acid biosynthetic process"/>
    <property type="evidence" value="ECO:0007669"/>
    <property type="project" value="UniProtKB-KW"/>
</dbReference>
<dbReference type="GO" id="GO:0009073">
    <property type="term" value="P:aromatic amino acid family biosynthetic process"/>
    <property type="evidence" value="ECO:0007669"/>
    <property type="project" value="UniProtKB-KW"/>
</dbReference>
<dbReference type="GO" id="GO:0009423">
    <property type="term" value="P:chorismate biosynthetic process"/>
    <property type="evidence" value="ECO:0007669"/>
    <property type="project" value="UniProtKB-UniRule"/>
</dbReference>
<dbReference type="CDD" id="cd01556">
    <property type="entry name" value="EPSP_synthase"/>
    <property type="match status" value="1"/>
</dbReference>
<dbReference type="FunFam" id="3.65.10.10:FF:000005">
    <property type="entry name" value="3-phosphoshikimate 1-carboxyvinyltransferase"/>
    <property type="match status" value="1"/>
</dbReference>
<dbReference type="FunFam" id="3.65.10.10:FF:000006">
    <property type="entry name" value="3-phosphoshikimate 1-carboxyvinyltransferase"/>
    <property type="match status" value="1"/>
</dbReference>
<dbReference type="Gene3D" id="3.65.10.10">
    <property type="entry name" value="Enolpyruvate transferase domain"/>
    <property type="match status" value="2"/>
</dbReference>
<dbReference type="HAMAP" id="MF_00210">
    <property type="entry name" value="EPSP_synth"/>
    <property type="match status" value="1"/>
</dbReference>
<dbReference type="InterPro" id="IPR001986">
    <property type="entry name" value="Enolpyruvate_Tfrase_dom"/>
</dbReference>
<dbReference type="InterPro" id="IPR036968">
    <property type="entry name" value="Enolpyruvate_Tfrase_sf"/>
</dbReference>
<dbReference type="InterPro" id="IPR006264">
    <property type="entry name" value="EPSP_synthase"/>
</dbReference>
<dbReference type="InterPro" id="IPR023193">
    <property type="entry name" value="EPSP_synthase_CS"/>
</dbReference>
<dbReference type="InterPro" id="IPR013792">
    <property type="entry name" value="RNA3'P_cycl/enolpyr_Trfase_a/b"/>
</dbReference>
<dbReference type="NCBIfam" id="TIGR01356">
    <property type="entry name" value="aroA"/>
    <property type="match status" value="1"/>
</dbReference>
<dbReference type="PANTHER" id="PTHR21090">
    <property type="entry name" value="AROM/DEHYDROQUINATE SYNTHASE"/>
    <property type="match status" value="1"/>
</dbReference>
<dbReference type="PANTHER" id="PTHR21090:SF5">
    <property type="entry name" value="PENTAFUNCTIONAL AROM POLYPEPTIDE"/>
    <property type="match status" value="1"/>
</dbReference>
<dbReference type="Pfam" id="PF00275">
    <property type="entry name" value="EPSP_synthase"/>
    <property type="match status" value="1"/>
</dbReference>
<dbReference type="PIRSF" id="PIRSF000505">
    <property type="entry name" value="EPSPS"/>
    <property type="match status" value="1"/>
</dbReference>
<dbReference type="SUPFAM" id="SSF55205">
    <property type="entry name" value="EPT/RTPC-like"/>
    <property type="match status" value="1"/>
</dbReference>
<dbReference type="PROSITE" id="PS00104">
    <property type="entry name" value="EPSP_SYNTHASE_1"/>
    <property type="match status" value="1"/>
</dbReference>
<dbReference type="PROSITE" id="PS00885">
    <property type="entry name" value="EPSP_SYNTHASE_2"/>
    <property type="match status" value="1"/>
</dbReference>
<organism>
    <name type="scientific">Coxiella burnetii (strain CbuK_Q154)</name>
    <name type="common">Coxiella burnetii (strain Q154)</name>
    <dbReference type="NCBI Taxonomy" id="434924"/>
    <lineage>
        <taxon>Bacteria</taxon>
        <taxon>Pseudomonadati</taxon>
        <taxon>Pseudomonadota</taxon>
        <taxon>Gammaproteobacteria</taxon>
        <taxon>Legionellales</taxon>
        <taxon>Coxiellaceae</taxon>
        <taxon>Coxiella</taxon>
    </lineage>
</organism>
<accession>B6J892</accession>
<comment type="function">
    <text evidence="1">Catalyzes the transfer of the enolpyruvyl moiety of phosphoenolpyruvate (PEP) to the 5-hydroxyl of shikimate-3-phosphate (S3P) to produce enolpyruvyl shikimate-3-phosphate and inorganic phosphate.</text>
</comment>
<comment type="catalytic activity">
    <reaction evidence="1">
        <text>3-phosphoshikimate + phosphoenolpyruvate = 5-O-(1-carboxyvinyl)-3-phosphoshikimate + phosphate</text>
        <dbReference type="Rhea" id="RHEA:21256"/>
        <dbReference type="ChEBI" id="CHEBI:43474"/>
        <dbReference type="ChEBI" id="CHEBI:57701"/>
        <dbReference type="ChEBI" id="CHEBI:58702"/>
        <dbReference type="ChEBI" id="CHEBI:145989"/>
        <dbReference type="EC" id="2.5.1.19"/>
    </reaction>
    <physiologicalReaction direction="left-to-right" evidence="1">
        <dbReference type="Rhea" id="RHEA:21257"/>
    </physiologicalReaction>
</comment>
<comment type="pathway">
    <text evidence="1">Metabolic intermediate biosynthesis; chorismate biosynthesis; chorismate from D-erythrose 4-phosphate and phosphoenolpyruvate: step 6/7.</text>
</comment>
<comment type="subunit">
    <text evidence="1">Monomer.</text>
</comment>
<comment type="subcellular location">
    <subcellularLocation>
        <location evidence="1">Cytoplasm</location>
    </subcellularLocation>
</comment>
<comment type="similarity">
    <text evidence="1">Belongs to the EPSP synthase family.</text>
</comment>
<gene>
    <name evidence="1" type="primary">aroA</name>
    <name type="ordered locus">CbuK_1310</name>
</gene>
<sequence length="438" mass="46402">MGYQTIPSQGLSGEICVPGDKSISHRAVLLAAIAEGQTQVDGFLMGADNLAMVSALQQMGASIQVIEDENILVVEGVGMTGLQAPPEALDCGNSGTAIRLLSGLLAGQPFNTVLTGDSSLQRRPMKRIIDPLTLMGAKIDSTGNVPPLKIYGNPRLTGIHYQLPMASAQVKSCLLLAGLYARGKTCITEPAPSRDHTERLLKHFHYTLQKDKQSICVSGGGKLKANDISIPGDISSAAFFIVAATITPGSAIRLCRVGVNPTRLGVINLLKMMGADIEVTHYTEKNEEPTADITVRHARLKGIDIPPDQVPLTIDEFPVLLIAAAVAQGKTVLRDVAELRVKETDRIAAMVDGLQKLGIAAESLPDGVIIQGGTLEGGEVNSYDDHRIAMAFAVAGTLAKGPVRIRNCDNVKTSFPNFVELANEVGMNVKGVRGRGGF</sequence>
<feature type="chain" id="PRO_1000099694" description="3-phosphoshikimate 1-carboxyvinyltransferase">
    <location>
        <begin position="1"/>
        <end position="438"/>
    </location>
</feature>
<feature type="active site" description="Proton acceptor" evidence="1">
    <location>
        <position position="315"/>
    </location>
</feature>
<feature type="binding site" evidence="1">
    <location>
        <position position="21"/>
    </location>
    <ligand>
        <name>3-phosphoshikimate</name>
        <dbReference type="ChEBI" id="CHEBI:145989"/>
    </ligand>
</feature>
<feature type="binding site" evidence="1">
    <location>
        <position position="21"/>
    </location>
    <ligand>
        <name>phosphoenolpyruvate</name>
        <dbReference type="ChEBI" id="CHEBI:58702"/>
    </ligand>
</feature>
<feature type="binding site" evidence="1">
    <location>
        <position position="22"/>
    </location>
    <ligand>
        <name>3-phosphoshikimate</name>
        <dbReference type="ChEBI" id="CHEBI:145989"/>
    </ligand>
</feature>
<feature type="binding site" evidence="1">
    <location>
        <position position="26"/>
    </location>
    <ligand>
        <name>3-phosphoshikimate</name>
        <dbReference type="ChEBI" id="CHEBI:145989"/>
    </ligand>
</feature>
<feature type="binding site" evidence="1">
    <location>
        <position position="95"/>
    </location>
    <ligand>
        <name>phosphoenolpyruvate</name>
        <dbReference type="ChEBI" id="CHEBI:58702"/>
    </ligand>
</feature>
<feature type="binding site" evidence="1">
    <location>
        <position position="123"/>
    </location>
    <ligand>
        <name>phosphoenolpyruvate</name>
        <dbReference type="ChEBI" id="CHEBI:58702"/>
    </ligand>
</feature>
<feature type="binding site" evidence="1">
    <location>
        <position position="167"/>
    </location>
    <ligand>
        <name>3-phosphoshikimate</name>
        <dbReference type="ChEBI" id="CHEBI:145989"/>
    </ligand>
</feature>
<feature type="binding site" evidence="1">
    <location>
        <position position="169"/>
    </location>
    <ligand>
        <name>3-phosphoshikimate</name>
        <dbReference type="ChEBI" id="CHEBI:145989"/>
    </ligand>
</feature>
<feature type="binding site" evidence="1">
    <location>
        <position position="169"/>
    </location>
    <ligand>
        <name>phosphoenolpyruvate</name>
        <dbReference type="ChEBI" id="CHEBI:58702"/>
    </ligand>
</feature>
<feature type="binding site" evidence="1">
    <location>
        <position position="315"/>
    </location>
    <ligand>
        <name>3-phosphoshikimate</name>
        <dbReference type="ChEBI" id="CHEBI:145989"/>
    </ligand>
</feature>
<feature type="binding site" evidence="1">
    <location>
        <position position="342"/>
    </location>
    <ligand>
        <name>3-phosphoshikimate</name>
        <dbReference type="ChEBI" id="CHEBI:145989"/>
    </ligand>
</feature>
<feature type="binding site" evidence="1">
    <location>
        <position position="346"/>
    </location>
    <ligand>
        <name>phosphoenolpyruvate</name>
        <dbReference type="ChEBI" id="CHEBI:58702"/>
    </ligand>
</feature>
<feature type="binding site" evidence="1">
    <location>
        <position position="387"/>
    </location>
    <ligand>
        <name>phosphoenolpyruvate</name>
        <dbReference type="ChEBI" id="CHEBI:58702"/>
    </ligand>
</feature>
<name>AROA_COXB1</name>
<proteinExistence type="inferred from homology"/>
<evidence type="ECO:0000255" key="1">
    <source>
        <dbReference type="HAMAP-Rule" id="MF_00210"/>
    </source>
</evidence>
<reference key="1">
    <citation type="journal article" date="2009" name="Infect. Immun.">
        <title>Comparative genomics reveal extensive transposon-mediated genomic plasticity and diversity among potential effector proteins within the genus Coxiella.</title>
        <authorList>
            <person name="Beare P.A."/>
            <person name="Unsworth N."/>
            <person name="Andoh M."/>
            <person name="Voth D.E."/>
            <person name="Omsland A."/>
            <person name="Gilk S.D."/>
            <person name="Williams K.P."/>
            <person name="Sobral B.W."/>
            <person name="Kupko J.J. III"/>
            <person name="Porcella S.F."/>
            <person name="Samuel J.E."/>
            <person name="Heinzen R.A."/>
        </authorList>
    </citation>
    <scope>NUCLEOTIDE SEQUENCE [LARGE SCALE GENOMIC DNA]</scope>
    <source>
        <strain>CbuK_Q154</strain>
    </source>
</reference>
<protein>
    <recommendedName>
        <fullName evidence="1">3-phosphoshikimate 1-carboxyvinyltransferase</fullName>
        <ecNumber evidence="1">2.5.1.19</ecNumber>
    </recommendedName>
    <alternativeName>
        <fullName evidence="1">5-enolpyruvylshikimate-3-phosphate synthase</fullName>
        <shortName evidence="1">EPSP synthase</shortName>
        <shortName evidence="1">EPSPS</shortName>
    </alternativeName>
</protein>
<keyword id="KW-0028">Amino-acid biosynthesis</keyword>
<keyword id="KW-0057">Aromatic amino acid biosynthesis</keyword>
<keyword id="KW-0963">Cytoplasm</keyword>
<keyword id="KW-0808">Transferase</keyword>